<proteinExistence type="inferred from homology"/>
<protein>
    <recommendedName>
        <fullName evidence="1">Integration host factor subunit alpha</fullName>
        <shortName evidence="1">IHF-alpha</shortName>
    </recommendedName>
</protein>
<comment type="function">
    <text evidence="1">This protein is one of the two subunits of integration host factor, a specific DNA-binding protein that functions in genetic recombination as well as in transcriptional and translational control.</text>
</comment>
<comment type="subunit">
    <text evidence="1">Heterodimer of an alpha and a beta chain.</text>
</comment>
<comment type="similarity">
    <text evidence="1">Belongs to the bacterial histone-like protein family.</text>
</comment>
<name>IHFA_BRUA2</name>
<dbReference type="EMBL" id="AM040264">
    <property type="protein sequence ID" value="CAJ10755.1"/>
    <property type="molecule type" value="Genomic_DNA"/>
</dbReference>
<dbReference type="RefSeq" id="WP_002963914.1">
    <property type="nucleotide sequence ID" value="NZ_KN046823.1"/>
</dbReference>
<dbReference type="SMR" id="Q2YNB8"/>
<dbReference type="STRING" id="359391.BAB1_0799"/>
<dbReference type="KEGG" id="bmf:BAB1_0799"/>
<dbReference type="PATRIC" id="fig|359391.11.peg.3110"/>
<dbReference type="HOGENOM" id="CLU_105066_1_1_5"/>
<dbReference type="PhylomeDB" id="Q2YNB8"/>
<dbReference type="Proteomes" id="UP000002719">
    <property type="component" value="Chromosome I"/>
</dbReference>
<dbReference type="GO" id="GO:0005829">
    <property type="term" value="C:cytosol"/>
    <property type="evidence" value="ECO:0007669"/>
    <property type="project" value="TreeGrafter"/>
</dbReference>
<dbReference type="GO" id="GO:0003677">
    <property type="term" value="F:DNA binding"/>
    <property type="evidence" value="ECO:0007669"/>
    <property type="project" value="UniProtKB-UniRule"/>
</dbReference>
<dbReference type="GO" id="GO:0030527">
    <property type="term" value="F:structural constituent of chromatin"/>
    <property type="evidence" value="ECO:0007669"/>
    <property type="project" value="InterPro"/>
</dbReference>
<dbReference type="GO" id="GO:0006310">
    <property type="term" value="P:DNA recombination"/>
    <property type="evidence" value="ECO:0007669"/>
    <property type="project" value="UniProtKB-UniRule"/>
</dbReference>
<dbReference type="GO" id="GO:0009893">
    <property type="term" value="P:positive regulation of metabolic process"/>
    <property type="evidence" value="ECO:0007669"/>
    <property type="project" value="UniProtKB-ARBA"/>
</dbReference>
<dbReference type="GO" id="GO:0006355">
    <property type="term" value="P:regulation of DNA-templated transcription"/>
    <property type="evidence" value="ECO:0007669"/>
    <property type="project" value="UniProtKB-UniRule"/>
</dbReference>
<dbReference type="GO" id="GO:0006417">
    <property type="term" value="P:regulation of translation"/>
    <property type="evidence" value="ECO:0007669"/>
    <property type="project" value="UniProtKB-UniRule"/>
</dbReference>
<dbReference type="CDD" id="cd13835">
    <property type="entry name" value="IHF_A"/>
    <property type="match status" value="1"/>
</dbReference>
<dbReference type="Gene3D" id="4.10.520.10">
    <property type="entry name" value="IHF-like DNA-binding proteins"/>
    <property type="match status" value="1"/>
</dbReference>
<dbReference type="HAMAP" id="MF_00380">
    <property type="entry name" value="IHF_alpha"/>
    <property type="match status" value="1"/>
</dbReference>
<dbReference type="InterPro" id="IPR000119">
    <property type="entry name" value="Hist_DNA-bd"/>
</dbReference>
<dbReference type="InterPro" id="IPR020816">
    <property type="entry name" value="Histone-like_DNA-bd_CS"/>
</dbReference>
<dbReference type="InterPro" id="IPR010992">
    <property type="entry name" value="IHF-like_DNA-bd_dom_sf"/>
</dbReference>
<dbReference type="InterPro" id="IPR005684">
    <property type="entry name" value="IHF_alpha"/>
</dbReference>
<dbReference type="NCBIfam" id="TIGR00987">
    <property type="entry name" value="himA"/>
    <property type="match status" value="1"/>
</dbReference>
<dbReference type="NCBIfam" id="NF001401">
    <property type="entry name" value="PRK00285.1"/>
    <property type="match status" value="1"/>
</dbReference>
<dbReference type="PANTHER" id="PTHR33175">
    <property type="entry name" value="DNA-BINDING PROTEIN HU"/>
    <property type="match status" value="1"/>
</dbReference>
<dbReference type="PANTHER" id="PTHR33175:SF2">
    <property type="entry name" value="INTEGRATION HOST FACTOR SUBUNIT ALPHA"/>
    <property type="match status" value="1"/>
</dbReference>
<dbReference type="Pfam" id="PF00216">
    <property type="entry name" value="Bac_DNA_binding"/>
    <property type="match status" value="1"/>
</dbReference>
<dbReference type="PRINTS" id="PR01727">
    <property type="entry name" value="DNABINDINGHU"/>
</dbReference>
<dbReference type="SMART" id="SM00411">
    <property type="entry name" value="BHL"/>
    <property type="match status" value="1"/>
</dbReference>
<dbReference type="SUPFAM" id="SSF47729">
    <property type="entry name" value="IHF-like DNA-binding proteins"/>
    <property type="match status" value="1"/>
</dbReference>
<dbReference type="PROSITE" id="PS00045">
    <property type="entry name" value="HISTONE_LIKE"/>
    <property type="match status" value="1"/>
</dbReference>
<accession>Q2YNB8</accession>
<organism>
    <name type="scientific">Brucella abortus (strain 2308)</name>
    <dbReference type="NCBI Taxonomy" id="359391"/>
    <lineage>
        <taxon>Bacteria</taxon>
        <taxon>Pseudomonadati</taxon>
        <taxon>Pseudomonadota</taxon>
        <taxon>Alphaproteobacteria</taxon>
        <taxon>Hyphomicrobiales</taxon>
        <taxon>Brucellaceae</taxon>
        <taxon>Brucella/Ochrobactrum group</taxon>
        <taxon>Brucella</taxon>
    </lineage>
</organism>
<feature type="chain" id="PRO_0000277719" description="Integration host factor subunit alpha">
    <location>
        <begin position="1"/>
        <end position="107"/>
    </location>
</feature>
<keyword id="KW-0233">DNA recombination</keyword>
<keyword id="KW-0238">DNA-binding</keyword>
<keyword id="KW-1185">Reference proteome</keyword>
<keyword id="KW-0804">Transcription</keyword>
<keyword id="KW-0805">Transcription regulation</keyword>
<keyword id="KW-0810">Translation regulation</keyword>
<sequence>MGGKTVTRADLAEAVYRKVGLSRTESAALVEMILDEVCDAIVNGETVKLSSFATFQVRDKNERIGRNPKTGEEVPILPRRVMTFKASNVLKQRILQEHQKRQGKTSK</sequence>
<gene>
    <name evidence="1" type="primary">ihfA</name>
    <name evidence="1" type="synonym">himA</name>
    <name type="ordered locus">BAB1_0799</name>
</gene>
<evidence type="ECO:0000255" key="1">
    <source>
        <dbReference type="HAMAP-Rule" id="MF_00380"/>
    </source>
</evidence>
<reference key="1">
    <citation type="journal article" date="2005" name="Infect. Immun.">
        <title>Whole-genome analyses of speciation events in pathogenic Brucellae.</title>
        <authorList>
            <person name="Chain P.S."/>
            <person name="Comerci D.J."/>
            <person name="Tolmasky M.E."/>
            <person name="Larimer F.W."/>
            <person name="Malfatti S.A."/>
            <person name="Vergez L.M."/>
            <person name="Aguero F."/>
            <person name="Land M.L."/>
            <person name="Ugalde R.A."/>
            <person name="Garcia E."/>
        </authorList>
    </citation>
    <scope>NUCLEOTIDE SEQUENCE [LARGE SCALE GENOMIC DNA]</scope>
    <source>
        <strain>2308</strain>
    </source>
</reference>